<sequence length="454" mass="51514">MSLLQFSGLFIVWLLATLFIGTLTWFEFRRVRFNFNVFFSLLFLLTFFFGFPLTSILVFRFNVAVVPAEVLLQALLSAGCFYAVYYVTYKTRLRTARAQAASSGGGLFTMNRVETHLAWMVMMAVALVSVGIFFMHNGFLLFRLHSYSQIFSSEVSGVALKRFFYFFIPAMLVVYFLRQSSRAWLFFLVSTVGFGLLTYMIVGGTRANIIIAFAIFLFIGIIRGWISPGMLAAAGVMGIVGMFWLALKRYGLNVSGDEAFYTFLYLTRDTFSPWENLALLLQHYGDIEFQGLAPIARDFYVFIPSWVWPDRPHIVLNTANYFTWEVLNNHSGLAISPTLLGSLVVMGGVWFIPPGAVVVGLIIKWFDWLYERGNHEPNRYKAAILHSFCFGAIFNMIVLAREGLDAFVSRVIFFMVVFGACLVVAKLIYWLLDSAGLIQPRRRRAAPLSPTETL</sequence>
<protein>
    <recommendedName>
        <fullName evidence="1">Probable ECA polymerase</fullName>
    </recommendedName>
</protein>
<accession>A7MQI7</accession>
<feature type="chain" id="PRO_1000062761" description="Probable ECA polymerase">
    <location>
        <begin position="1"/>
        <end position="454"/>
    </location>
</feature>
<feature type="transmembrane region" description="Helical" evidence="1">
    <location>
        <begin position="6"/>
        <end position="26"/>
    </location>
</feature>
<feature type="transmembrane region" description="Helical" evidence="1">
    <location>
        <begin position="37"/>
        <end position="57"/>
    </location>
</feature>
<feature type="transmembrane region" description="Helical" evidence="1">
    <location>
        <begin position="63"/>
        <end position="83"/>
    </location>
</feature>
<feature type="transmembrane region" description="Helical" evidence="1">
    <location>
        <begin position="122"/>
        <end position="142"/>
    </location>
</feature>
<feature type="transmembrane region" description="Helical" evidence="1">
    <location>
        <begin position="157"/>
        <end position="177"/>
    </location>
</feature>
<feature type="transmembrane region" description="Helical" evidence="1">
    <location>
        <begin position="183"/>
        <end position="203"/>
    </location>
</feature>
<feature type="transmembrane region" description="Helical" evidence="1">
    <location>
        <begin position="209"/>
        <end position="229"/>
    </location>
</feature>
<feature type="transmembrane region" description="Helical" evidence="1">
    <location>
        <begin position="230"/>
        <end position="250"/>
    </location>
</feature>
<feature type="transmembrane region" description="Helical" evidence="1">
    <location>
        <begin position="343"/>
        <end position="363"/>
    </location>
</feature>
<feature type="transmembrane region" description="Helical" evidence="1">
    <location>
        <begin position="380"/>
        <end position="400"/>
    </location>
</feature>
<feature type="transmembrane region" description="Helical" evidence="1">
    <location>
        <begin position="411"/>
        <end position="431"/>
    </location>
</feature>
<reference key="1">
    <citation type="journal article" date="2010" name="PLoS ONE">
        <title>Genome sequence of Cronobacter sakazakii BAA-894 and comparative genomic hybridization analysis with other Cronobacter species.</title>
        <authorList>
            <person name="Kucerova E."/>
            <person name="Clifton S.W."/>
            <person name="Xia X.Q."/>
            <person name="Long F."/>
            <person name="Porwollik S."/>
            <person name="Fulton L."/>
            <person name="Fronick C."/>
            <person name="Minx P."/>
            <person name="Kyung K."/>
            <person name="Warren W."/>
            <person name="Fulton R."/>
            <person name="Feng D."/>
            <person name="Wollam A."/>
            <person name="Shah N."/>
            <person name="Bhonagiri V."/>
            <person name="Nash W.E."/>
            <person name="Hallsworth-Pepin K."/>
            <person name="Wilson R.K."/>
            <person name="McClelland M."/>
            <person name="Forsythe S.J."/>
        </authorList>
    </citation>
    <scope>NUCLEOTIDE SEQUENCE [LARGE SCALE GENOMIC DNA]</scope>
    <source>
        <strain>ATCC BAA-894</strain>
    </source>
</reference>
<name>WZYE_CROS8</name>
<proteinExistence type="inferred from homology"/>
<organism>
    <name type="scientific">Cronobacter sakazakii (strain ATCC BAA-894)</name>
    <name type="common">Enterobacter sakazakii</name>
    <dbReference type="NCBI Taxonomy" id="290339"/>
    <lineage>
        <taxon>Bacteria</taxon>
        <taxon>Pseudomonadati</taxon>
        <taxon>Pseudomonadota</taxon>
        <taxon>Gammaproteobacteria</taxon>
        <taxon>Enterobacterales</taxon>
        <taxon>Enterobacteriaceae</taxon>
        <taxon>Cronobacter</taxon>
    </lineage>
</organism>
<keyword id="KW-0997">Cell inner membrane</keyword>
<keyword id="KW-1003">Cell membrane</keyword>
<keyword id="KW-0472">Membrane</keyword>
<keyword id="KW-1185">Reference proteome</keyword>
<keyword id="KW-0812">Transmembrane</keyword>
<keyword id="KW-1133">Transmembrane helix</keyword>
<comment type="function">
    <text evidence="1">Probably involved in the polymerization of enterobacterial common antigen (ECA) trisaccharide repeat units.</text>
</comment>
<comment type="pathway">
    <text evidence="1">Bacterial outer membrane biogenesis; enterobacterial common antigen biosynthesis.</text>
</comment>
<comment type="subunit">
    <text evidence="1">Probably part of a complex composed of WzxE, WzyE and WzzE.</text>
</comment>
<comment type="subcellular location">
    <subcellularLocation>
        <location evidence="1">Cell inner membrane</location>
        <topology evidence="1">Multi-pass membrane protein</topology>
    </subcellularLocation>
</comment>
<comment type="similarity">
    <text evidence="1">Belongs to the WzyE family.</text>
</comment>
<evidence type="ECO:0000255" key="1">
    <source>
        <dbReference type="HAMAP-Rule" id="MF_01003"/>
    </source>
</evidence>
<gene>
    <name evidence="1" type="primary">wzyE</name>
    <name type="ordered locus">ESA_03766</name>
</gene>
<dbReference type="EMBL" id="CP000783">
    <property type="protein sequence ID" value="ABU78958.1"/>
    <property type="molecule type" value="Genomic_DNA"/>
</dbReference>
<dbReference type="RefSeq" id="WP_004386371.1">
    <property type="nucleotide sequence ID" value="NC_009778.1"/>
</dbReference>
<dbReference type="GeneID" id="56732417"/>
<dbReference type="KEGG" id="esa:ESA_03766"/>
<dbReference type="HOGENOM" id="CLU_049711_0_0_6"/>
<dbReference type="UniPathway" id="UPA00566"/>
<dbReference type="Proteomes" id="UP000000260">
    <property type="component" value="Chromosome"/>
</dbReference>
<dbReference type="GO" id="GO:0005886">
    <property type="term" value="C:plasma membrane"/>
    <property type="evidence" value="ECO:0007669"/>
    <property type="project" value="UniProtKB-SubCell"/>
</dbReference>
<dbReference type="GO" id="GO:0009246">
    <property type="term" value="P:enterobacterial common antigen biosynthetic process"/>
    <property type="evidence" value="ECO:0007669"/>
    <property type="project" value="UniProtKB-UniRule"/>
</dbReference>
<dbReference type="HAMAP" id="MF_01003">
    <property type="entry name" value="WzyE"/>
    <property type="match status" value="1"/>
</dbReference>
<dbReference type="InterPro" id="IPR010691">
    <property type="entry name" value="WzyE"/>
</dbReference>
<dbReference type="NCBIfam" id="NF002820">
    <property type="entry name" value="PRK02975.1"/>
    <property type="match status" value="1"/>
</dbReference>
<dbReference type="Pfam" id="PF06899">
    <property type="entry name" value="WzyE"/>
    <property type="match status" value="1"/>
</dbReference>